<name>CMOA_ECOHS</name>
<keyword id="KW-0949">S-adenosyl-L-methionine</keyword>
<keyword id="KW-0808">Transferase</keyword>
<sequence>MSHRDTLFSAPIARLGDWTFDERVAEVFPDMIQRSVPGYSNIISMIGMLAERFVQPGTQVYDLGCSLGAATLSVRRNIHHDNCKIIAIDNSPAMIERCRRHIDAYKAPTPVDVIEGDIRDIAIENASMVVLNFTLQFLEPSERQALLDKIYQGLNPGGALVLSEKFSFEDAKVGELLFNMHHDFKRANGYSELEISQKRSMLENVMLTDSVETHKARLHKAGFEHSELWFQCFNFGSLVALKAEDAA</sequence>
<comment type="function">
    <text evidence="1">Catalyzes the conversion of S-adenosyl-L-methionine (SAM) to carboxy-S-adenosyl-L-methionine (Cx-SAM).</text>
</comment>
<comment type="catalytic activity">
    <reaction evidence="1">
        <text>prephenate + S-adenosyl-L-methionine = carboxy-S-adenosyl-L-methionine + 3-phenylpyruvate + H2O</text>
        <dbReference type="Rhea" id="RHEA:51692"/>
        <dbReference type="ChEBI" id="CHEBI:15377"/>
        <dbReference type="ChEBI" id="CHEBI:18005"/>
        <dbReference type="ChEBI" id="CHEBI:29934"/>
        <dbReference type="ChEBI" id="CHEBI:59789"/>
        <dbReference type="ChEBI" id="CHEBI:134278"/>
    </reaction>
</comment>
<comment type="subunit">
    <text evidence="1">Homodimer.</text>
</comment>
<comment type="similarity">
    <text evidence="1">Belongs to the class I-like SAM-binding methyltransferase superfamily. Cx-SAM synthase family.</text>
</comment>
<accession>A8A171</accession>
<organism>
    <name type="scientific">Escherichia coli O9:H4 (strain HS)</name>
    <dbReference type="NCBI Taxonomy" id="331112"/>
    <lineage>
        <taxon>Bacteria</taxon>
        <taxon>Pseudomonadati</taxon>
        <taxon>Pseudomonadota</taxon>
        <taxon>Gammaproteobacteria</taxon>
        <taxon>Enterobacterales</taxon>
        <taxon>Enterobacteriaceae</taxon>
        <taxon>Escherichia</taxon>
    </lineage>
</organism>
<evidence type="ECO:0000255" key="1">
    <source>
        <dbReference type="HAMAP-Rule" id="MF_01589"/>
    </source>
</evidence>
<protein>
    <recommendedName>
        <fullName evidence="1">Carboxy-S-adenosyl-L-methionine synthase</fullName>
        <shortName evidence="1">Cx-SAM synthase</shortName>
        <ecNumber evidence="1">2.1.3.-</ecNumber>
    </recommendedName>
</protein>
<gene>
    <name evidence="1" type="primary">cmoA</name>
    <name type="ordered locus">EcHS_A1964</name>
</gene>
<proteinExistence type="inferred from homology"/>
<reference key="1">
    <citation type="journal article" date="2008" name="J. Bacteriol.">
        <title>The pangenome structure of Escherichia coli: comparative genomic analysis of E. coli commensal and pathogenic isolates.</title>
        <authorList>
            <person name="Rasko D.A."/>
            <person name="Rosovitz M.J."/>
            <person name="Myers G.S.A."/>
            <person name="Mongodin E.F."/>
            <person name="Fricke W.F."/>
            <person name="Gajer P."/>
            <person name="Crabtree J."/>
            <person name="Sebaihia M."/>
            <person name="Thomson N.R."/>
            <person name="Chaudhuri R."/>
            <person name="Henderson I.R."/>
            <person name="Sperandio V."/>
            <person name="Ravel J."/>
        </authorList>
    </citation>
    <scope>NUCLEOTIDE SEQUENCE [LARGE SCALE GENOMIC DNA]</scope>
    <source>
        <strain>HS</strain>
    </source>
</reference>
<dbReference type="EC" id="2.1.3.-" evidence="1"/>
<dbReference type="EMBL" id="CP000802">
    <property type="protein sequence ID" value="ABV06275.1"/>
    <property type="molecule type" value="Genomic_DNA"/>
</dbReference>
<dbReference type="RefSeq" id="WP_000019588.1">
    <property type="nucleotide sequence ID" value="NC_009800.1"/>
</dbReference>
<dbReference type="SMR" id="A8A171"/>
<dbReference type="GeneID" id="75202724"/>
<dbReference type="KEGG" id="ecx:EcHS_A1964"/>
<dbReference type="HOGENOM" id="CLU_078475_0_0_6"/>
<dbReference type="GO" id="GO:0016743">
    <property type="term" value="F:carboxyl- or carbamoyltransferase activity"/>
    <property type="evidence" value="ECO:0007669"/>
    <property type="project" value="UniProtKB-UniRule"/>
</dbReference>
<dbReference type="GO" id="GO:1904047">
    <property type="term" value="F:S-adenosyl-L-methionine binding"/>
    <property type="evidence" value="ECO:0007669"/>
    <property type="project" value="UniProtKB-UniRule"/>
</dbReference>
<dbReference type="GO" id="GO:0002098">
    <property type="term" value="P:tRNA wobble uridine modification"/>
    <property type="evidence" value="ECO:0007669"/>
    <property type="project" value="InterPro"/>
</dbReference>
<dbReference type="CDD" id="cd02440">
    <property type="entry name" value="AdoMet_MTases"/>
    <property type="match status" value="1"/>
</dbReference>
<dbReference type="FunFam" id="3.40.50.150:FF:000030">
    <property type="entry name" value="Carboxy-S-adenosyl-L-methionine synthase"/>
    <property type="match status" value="1"/>
</dbReference>
<dbReference type="Gene3D" id="3.40.50.150">
    <property type="entry name" value="Vaccinia Virus protein VP39"/>
    <property type="match status" value="1"/>
</dbReference>
<dbReference type="HAMAP" id="MF_01589">
    <property type="entry name" value="Cx_SAM_synthase"/>
    <property type="match status" value="1"/>
</dbReference>
<dbReference type="InterPro" id="IPR005271">
    <property type="entry name" value="CmoA"/>
</dbReference>
<dbReference type="InterPro" id="IPR041698">
    <property type="entry name" value="Methyltransf_25"/>
</dbReference>
<dbReference type="InterPro" id="IPR029063">
    <property type="entry name" value="SAM-dependent_MTases_sf"/>
</dbReference>
<dbReference type="NCBIfam" id="TIGR00740">
    <property type="entry name" value="carboxy-S-adenosyl-L-methionine synthase CmoA"/>
    <property type="match status" value="1"/>
</dbReference>
<dbReference type="NCBIfam" id="NF011995">
    <property type="entry name" value="PRK15451.1"/>
    <property type="match status" value="1"/>
</dbReference>
<dbReference type="PANTHER" id="PTHR43861:SF2">
    <property type="entry name" value="CARBOXY-S-ADENOSYL-L-METHIONINE SYNTHASE"/>
    <property type="match status" value="1"/>
</dbReference>
<dbReference type="PANTHER" id="PTHR43861">
    <property type="entry name" value="TRANS-ACONITATE 2-METHYLTRANSFERASE-RELATED"/>
    <property type="match status" value="1"/>
</dbReference>
<dbReference type="Pfam" id="PF13649">
    <property type="entry name" value="Methyltransf_25"/>
    <property type="match status" value="1"/>
</dbReference>
<dbReference type="PIRSF" id="PIRSF006325">
    <property type="entry name" value="MeTrfase_bac"/>
    <property type="match status" value="1"/>
</dbReference>
<dbReference type="SUPFAM" id="SSF53335">
    <property type="entry name" value="S-adenosyl-L-methionine-dependent methyltransferases"/>
    <property type="match status" value="1"/>
</dbReference>
<feature type="chain" id="PRO_1000069321" description="Carboxy-S-adenosyl-L-methionine synthase">
    <location>
        <begin position="1"/>
        <end position="247"/>
    </location>
</feature>
<feature type="binding site" evidence="1">
    <location>
        <position position="39"/>
    </location>
    <ligand>
        <name>S-adenosyl-L-methionine</name>
        <dbReference type="ChEBI" id="CHEBI:59789"/>
    </ligand>
</feature>
<feature type="binding site" evidence="1">
    <location>
        <begin position="64"/>
        <end position="66"/>
    </location>
    <ligand>
        <name>S-adenosyl-L-methionine</name>
        <dbReference type="ChEBI" id="CHEBI:59789"/>
    </ligand>
</feature>
<feature type="binding site" evidence="1">
    <location>
        <begin position="89"/>
        <end position="90"/>
    </location>
    <ligand>
        <name>S-adenosyl-L-methionine</name>
        <dbReference type="ChEBI" id="CHEBI:59789"/>
    </ligand>
</feature>
<feature type="binding site" evidence="1">
    <location>
        <begin position="117"/>
        <end position="118"/>
    </location>
    <ligand>
        <name>S-adenosyl-L-methionine</name>
        <dbReference type="ChEBI" id="CHEBI:59789"/>
    </ligand>
</feature>
<feature type="binding site" evidence="1">
    <location>
        <position position="132"/>
    </location>
    <ligand>
        <name>S-adenosyl-L-methionine</name>
        <dbReference type="ChEBI" id="CHEBI:59789"/>
    </ligand>
</feature>
<feature type="binding site" evidence="1">
    <location>
        <position position="199"/>
    </location>
    <ligand>
        <name>S-adenosyl-L-methionine</name>
        <dbReference type="ChEBI" id="CHEBI:59789"/>
    </ligand>
</feature>